<feature type="chain" id="PRO_0000238468" description="28S rRNA (uridine-N(3))-methyltransferase">
    <location>
        <begin position="1"/>
        <end position="376"/>
    </location>
</feature>
<feature type="region of interest" description="Disordered" evidence="1">
    <location>
        <begin position="1"/>
        <end position="33"/>
    </location>
</feature>
<feature type="region of interest" description="Disordered" evidence="1">
    <location>
        <begin position="49"/>
        <end position="71"/>
    </location>
</feature>
<feature type="compositionally biased region" description="Basic and acidic residues" evidence="1">
    <location>
        <begin position="15"/>
        <end position="33"/>
    </location>
</feature>
<feature type="binding site" evidence="8 14 15">
    <location>
        <position position="289"/>
    </location>
    <ligand>
        <name>S-adenosyl-L-homocysteine</name>
        <dbReference type="ChEBI" id="CHEBI:57856"/>
    </ligand>
</feature>
<feature type="binding site" evidence="8 14 15">
    <location>
        <position position="292"/>
    </location>
    <ligand>
        <name>S-adenosyl-L-homocysteine</name>
        <dbReference type="ChEBI" id="CHEBI:57856"/>
    </ligand>
</feature>
<feature type="binding site" evidence="16">
    <location>
        <position position="292"/>
    </location>
    <ligand>
        <name>S-adenosyl-L-methionine</name>
        <dbReference type="ChEBI" id="CHEBI:59789"/>
    </ligand>
</feature>
<feature type="binding site" evidence="8 14 15">
    <location>
        <position position="312"/>
    </location>
    <ligand>
        <name>S-adenosyl-L-homocysteine</name>
        <dbReference type="ChEBI" id="CHEBI:57856"/>
    </ligand>
</feature>
<feature type="binding site" evidence="16">
    <location>
        <position position="312"/>
    </location>
    <ligand>
        <name>S-adenosyl-L-methionine</name>
        <dbReference type="ChEBI" id="CHEBI:59789"/>
    </ligand>
</feature>
<feature type="binding site" evidence="8 14 15">
    <location>
        <position position="341"/>
    </location>
    <ligand>
        <name>S-adenosyl-L-homocysteine</name>
        <dbReference type="ChEBI" id="CHEBI:57856"/>
    </ligand>
</feature>
<feature type="binding site" evidence="16">
    <location>
        <position position="341"/>
    </location>
    <ligand>
        <name>S-adenosyl-L-methionine</name>
        <dbReference type="ChEBI" id="CHEBI:59789"/>
    </ligand>
</feature>
<feature type="binding site" evidence="8 14 15">
    <location>
        <position position="342"/>
    </location>
    <ligand>
        <name>S-adenosyl-L-homocysteine</name>
        <dbReference type="ChEBI" id="CHEBI:57856"/>
    </ligand>
</feature>
<feature type="binding site" evidence="16">
    <location>
        <position position="342"/>
    </location>
    <ligand>
        <name>S-adenosyl-L-methionine</name>
        <dbReference type="ChEBI" id="CHEBI:59789"/>
    </ligand>
</feature>
<feature type="sequence variant" id="VAR_050844" description="In dbSNP:rs34500948.">
    <original>A</original>
    <variation>V</variation>
    <location>
        <position position="63"/>
    </location>
</feature>
<feature type="sequence variant" id="VAR_026552" description="In dbSNP:rs6478854." evidence="2">
    <original>T</original>
    <variation>R</variation>
    <location>
        <position position="130"/>
    </location>
</feature>
<feature type="sequence variant" id="VAR_026553" description="In dbSNP:rs2280843." evidence="2">
    <original>I</original>
    <variation>T</variation>
    <location>
        <position position="369"/>
    </location>
</feature>
<feature type="sequence conflict" description="In Ref. 2; AAH33677." evidence="11" ref="2">
    <original>C</original>
    <variation>Y</variation>
    <location>
        <position position="343"/>
    </location>
</feature>
<feature type="strand" evidence="18">
    <location>
        <begin position="74"/>
        <end position="80"/>
    </location>
</feature>
<feature type="helix" evidence="18">
    <location>
        <begin position="81"/>
        <end position="86"/>
    </location>
</feature>
<feature type="helix" evidence="18">
    <location>
        <begin position="90"/>
        <end position="106"/>
    </location>
</feature>
<feature type="strand" evidence="18">
    <location>
        <begin position="110"/>
        <end position="115"/>
    </location>
</feature>
<feature type="helix" evidence="18">
    <location>
        <begin position="137"/>
        <end position="150"/>
    </location>
</feature>
<feature type="helix" evidence="18">
    <location>
        <begin position="153"/>
        <end position="155"/>
    </location>
</feature>
<feature type="helix" evidence="18">
    <location>
        <begin position="156"/>
        <end position="159"/>
    </location>
</feature>
<feature type="helix" evidence="18">
    <location>
        <begin position="167"/>
        <end position="172"/>
    </location>
</feature>
<feature type="strand" evidence="18">
    <location>
        <begin position="188"/>
        <end position="194"/>
    </location>
</feature>
<feature type="strand" evidence="18">
    <location>
        <begin position="205"/>
        <end position="208"/>
    </location>
</feature>
<feature type="strand" evidence="18">
    <location>
        <begin position="210"/>
        <end position="213"/>
    </location>
</feature>
<feature type="strand" evidence="18">
    <location>
        <begin position="215"/>
        <end position="219"/>
    </location>
</feature>
<feature type="strand" evidence="18">
    <location>
        <begin position="226"/>
        <end position="231"/>
    </location>
</feature>
<feature type="strand" evidence="18">
    <location>
        <begin position="240"/>
        <end position="247"/>
    </location>
</feature>
<feature type="helix" evidence="18">
    <location>
        <begin position="251"/>
        <end position="256"/>
    </location>
</feature>
<feature type="strand" evidence="18">
    <location>
        <begin position="263"/>
        <end position="269"/>
    </location>
</feature>
<feature type="helix" evidence="18">
    <location>
        <begin position="270"/>
        <end position="275"/>
    </location>
</feature>
<feature type="strand" evidence="18">
    <location>
        <begin position="284"/>
        <end position="289"/>
    </location>
</feature>
<feature type="strand" evidence="18">
    <location>
        <begin position="293"/>
        <end position="295"/>
    </location>
</feature>
<feature type="helix" evidence="18">
    <location>
        <begin position="296"/>
        <end position="298"/>
    </location>
</feature>
<feature type="strand" evidence="18">
    <location>
        <begin position="305"/>
        <end position="310"/>
    </location>
</feature>
<feature type="helix" evidence="18">
    <location>
        <begin position="318"/>
        <end position="323"/>
    </location>
</feature>
<feature type="helix" evidence="18">
    <location>
        <begin position="332"/>
        <end position="335"/>
    </location>
</feature>
<feature type="strand" evidence="18">
    <location>
        <begin position="336"/>
        <end position="343"/>
    </location>
</feature>
<feature type="strand" evidence="18">
    <location>
        <begin position="347"/>
        <end position="349"/>
    </location>
</feature>
<feature type="helix" evidence="18">
    <location>
        <begin position="353"/>
        <end position="372"/>
    </location>
</feature>
<evidence type="ECO:0000256" key="1">
    <source>
        <dbReference type="SAM" id="MobiDB-lite"/>
    </source>
</evidence>
<evidence type="ECO:0000269" key="2">
    <source>
    </source>
</evidence>
<evidence type="ECO:0000269" key="3">
    <source>
    </source>
</evidence>
<evidence type="ECO:0000269" key="4">
    <source>
    </source>
</evidence>
<evidence type="ECO:0000269" key="5">
    <source>
    </source>
</evidence>
<evidence type="ECO:0000269" key="6">
    <source>
    </source>
</evidence>
<evidence type="ECO:0000269" key="7">
    <source>
    </source>
</evidence>
<evidence type="ECO:0000269" key="8">
    <source ref="9"/>
</evidence>
<evidence type="ECO:0000303" key="9">
    <source>
    </source>
</evidence>
<evidence type="ECO:0000303" key="10">
    <source>
    </source>
</evidence>
<evidence type="ECO:0000305" key="11"/>
<evidence type="ECO:0000305" key="12">
    <source>
    </source>
</evidence>
<evidence type="ECO:0000312" key="13">
    <source>
        <dbReference type="HGNC" id="HGNC:26933"/>
    </source>
</evidence>
<evidence type="ECO:0007744" key="14">
    <source>
        <dbReference type="PDB" id="4RG1"/>
    </source>
</evidence>
<evidence type="ECO:0007744" key="15">
    <source>
        <dbReference type="PDB" id="8QSU"/>
    </source>
</evidence>
<evidence type="ECO:0007744" key="16">
    <source>
        <dbReference type="PDB" id="8QSV"/>
    </source>
</evidence>
<evidence type="ECO:0007744" key="17">
    <source>
        <dbReference type="PDB" id="8QSW"/>
    </source>
</evidence>
<evidence type="ECO:0007829" key="18">
    <source>
        <dbReference type="PDB" id="4RG1"/>
    </source>
</evidence>
<protein>
    <recommendedName>
        <fullName evidence="11">28S rRNA (uridine-N(3))-methyltransferase</fullName>
        <ecNumber evidence="7">2.1.1.-</ecNumber>
    </recommendedName>
    <alternativeName>
        <fullName evidence="10">Centromere protein 32</fullName>
        <shortName evidence="10">CENP-32</shortName>
    </alternativeName>
    <alternativeName>
        <fullName evidence="9">Kinetochore-associated protein</fullName>
    </alternativeName>
    <alternativeName>
        <fullName>Methyltransferase C9orf114</fullName>
    </alternativeName>
    <alternativeName>
        <fullName evidence="11">Ribosomal RNA methyltransferase SPOUT1</fullName>
    </alternativeName>
    <alternativeName>
        <fullName evidence="13">SPOUT domain-containing methyltransferase 1</fullName>
    </alternativeName>
</protein>
<gene>
    <name evidence="13" type="primary">SPOUT1</name>
    <name type="synonym">C9orf114</name>
</gene>
<sequence>MAERGRKRPCGPGEHGQRIEWRKWKQQKKEEKKKWKDLKLMKKLERQRAQEEQAKRLEEEEAAAEKEDRGRPYTLSVALPGSILDNAQSPELRTYLAGQIARACAIFCVDEIVVFDEEGQDAKTVEGEFTGVGKKGQACVQLARILQYLECPQYLRKAFFPKHQDLQFAGLLNPLDSPHHMRQDEESEFREGIVVDRPTRPGHGSFVNCGMKKEVKIDKNLEPGLRVTVRLNQQQHPDCKTYHGKVVSSQDPRTKAGLYWGYTVRLASCLSAVFAEAPFQDGYDLTIGTSERGSDVASAQLPNFRHALVVFGGLQGLEAGADADPNLEVAEPSVLFDLYVNTCPGQGSRTIRTEEAILISLAALQPGLIQAGARHT</sequence>
<organism>
    <name type="scientific">Homo sapiens</name>
    <name type="common">Human</name>
    <dbReference type="NCBI Taxonomy" id="9606"/>
    <lineage>
        <taxon>Eukaryota</taxon>
        <taxon>Metazoa</taxon>
        <taxon>Chordata</taxon>
        <taxon>Craniata</taxon>
        <taxon>Vertebrata</taxon>
        <taxon>Euteleostomi</taxon>
        <taxon>Mammalia</taxon>
        <taxon>Eutheria</taxon>
        <taxon>Euarchontoglires</taxon>
        <taxon>Primates</taxon>
        <taxon>Haplorrhini</taxon>
        <taxon>Catarrhini</taxon>
        <taxon>Hominidae</taxon>
        <taxon>Homo</taxon>
    </lineage>
</organism>
<dbReference type="EC" id="2.1.1.-" evidence="7"/>
<dbReference type="EMBL" id="AL441992">
    <property type="status" value="NOT_ANNOTATED_CDS"/>
    <property type="molecule type" value="Genomic_DNA"/>
</dbReference>
<dbReference type="EMBL" id="BC010579">
    <property type="protein sequence ID" value="AAH10579.1"/>
    <property type="molecule type" value="mRNA"/>
</dbReference>
<dbReference type="EMBL" id="BC033677">
    <property type="protein sequence ID" value="AAH33677.1"/>
    <property type="molecule type" value="mRNA"/>
</dbReference>
<dbReference type="EMBL" id="BC039590">
    <property type="protein sequence ID" value="AAH39590.1"/>
    <property type="molecule type" value="mRNA"/>
</dbReference>
<dbReference type="EMBL" id="BC046133">
    <property type="protein sequence ID" value="AAH46133.1"/>
    <property type="molecule type" value="mRNA"/>
</dbReference>
<dbReference type="EMBL" id="BC063644">
    <property type="protein sequence ID" value="AAH63644.1"/>
    <property type="molecule type" value="mRNA"/>
</dbReference>
<dbReference type="EMBL" id="BC021273">
    <property type="protein sequence ID" value="AAH21273.1"/>
    <property type="molecule type" value="mRNA"/>
</dbReference>
<dbReference type="CCDS" id="CCDS6913.1"/>
<dbReference type="RefSeq" id="NP_057474.2">
    <property type="nucleotide sequence ID" value="NM_016390.3"/>
</dbReference>
<dbReference type="PDB" id="4RG1">
    <property type="method" value="X-ray"/>
    <property type="resolution" value="1.86 A"/>
    <property type="chains" value="A/B=64-376"/>
</dbReference>
<dbReference type="PDB" id="8QSU">
    <property type="method" value="X-ray"/>
    <property type="resolution" value="2.38 A"/>
    <property type="chains" value="A=71-376"/>
</dbReference>
<dbReference type="PDB" id="8QSV">
    <property type="method" value="X-ray"/>
    <property type="resolution" value="2.62 A"/>
    <property type="chains" value="A=71-376"/>
</dbReference>
<dbReference type="PDB" id="8QSW">
    <property type="method" value="X-ray"/>
    <property type="resolution" value="2.50 A"/>
    <property type="chains" value="A=71-376"/>
</dbReference>
<dbReference type="PDBsum" id="4RG1"/>
<dbReference type="PDBsum" id="8QSU"/>
<dbReference type="PDBsum" id="8QSV"/>
<dbReference type="PDBsum" id="8QSW"/>
<dbReference type="SMR" id="Q5T280"/>
<dbReference type="BioGRID" id="119567">
    <property type="interactions" value="146"/>
</dbReference>
<dbReference type="FunCoup" id="Q5T280">
    <property type="interactions" value="1091"/>
</dbReference>
<dbReference type="IntAct" id="Q5T280">
    <property type="interactions" value="39"/>
</dbReference>
<dbReference type="MINT" id="Q5T280"/>
<dbReference type="STRING" id="9606.ENSP00000354812"/>
<dbReference type="iPTMnet" id="Q5T280"/>
<dbReference type="PhosphoSitePlus" id="Q5T280"/>
<dbReference type="SwissPalm" id="Q5T280"/>
<dbReference type="BioMuta" id="SPOUT1"/>
<dbReference type="DMDM" id="126302532"/>
<dbReference type="jPOST" id="Q5T280"/>
<dbReference type="MassIVE" id="Q5T280"/>
<dbReference type="PaxDb" id="9606-ENSP00000354812"/>
<dbReference type="PeptideAtlas" id="Q5T280"/>
<dbReference type="ProteomicsDB" id="64319"/>
<dbReference type="Pumba" id="Q5T280"/>
<dbReference type="Antibodypedia" id="17713">
    <property type="antibodies" value="48 antibodies from 12 providers"/>
</dbReference>
<dbReference type="DNASU" id="51490"/>
<dbReference type="Ensembl" id="ENST00000361256.10">
    <property type="protein sequence ID" value="ENSP00000354812.5"/>
    <property type="gene ID" value="ENSG00000198917.13"/>
</dbReference>
<dbReference type="GeneID" id="51490"/>
<dbReference type="KEGG" id="hsa:51490"/>
<dbReference type="MANE-Select" id="ENST00000361256.10">
    <property type="protein sequence ID" value="ENSP00000354812.5"/>
    <property type="RefSeq nucleotide sequence ID" value="NM_016390.4"/>
    <property type="RefSeq protein sequence ID" value="NP_057474.2"/>
</dbReference>
<dbReference type="UCSC" id="uc004bwd.3">
    <property type="organism name" value="human"/>
</dbReference>
<dbReference type="AGR" id="HGNC:26933"/>
<dbReference type="CTD" id="51490"/>
<dbReference type="DisGeNET" id="51490"/>
<dbReference type="GeneCards" id="SPOUT1"/>
<dbReference type="HGNC" id="HGNC:26933">
    <property type="gene designation" value="SPOUT1"/>
</dbReference>
<dbReference type="HPA" id="ENSG00000198917">
    <property type="expression patterns" value="Low tissue specificity"/>
</dbReference>
<dbReference type="MIM" id="617614">
    <property type="type" value="gene"/>
</dbReference>
<dbReference type="neXtProt" id="NX_Q5T280"/>
<dbReference type="OpenTargets" id="ENSG00000198917"/>
<dbReference type="PharmGKB" id="PA134958095"/>
<dbReference type="VEuPathDB" id="HostDB:ENSG00000198917"/>
<dbReference type="eggNOG" id="KOG3925">
    <property type="taxonomic scope" value="Eukaryota"/>
</dbReference>
<dbReference type="GeneTree" id="ENSGT00390000016537"/>
<dbReference type="HOGENOM" id="CLU_017233_4_0_1"/>
<dbReference type="InParanoid" id="Q5T280"/>
<dbReference type="OMA" id="FFPIHKD"/>
<dbReference type="OrthoDB" id="361029at2759"/>
<dbReference type="PAN-GO" id="Q5T280">
    <property type="GO annotations" value="6 GO annotations based on evolutionary models"/>
</dbReference>
<dbReference type="PhylomeDB" id="Q5T280"/>
<dbReference type="TreeFam" id="TF105821"/>
<dbReference type="PathwayCommons" id="Q5T280"/>
<dbReference type="SignaLink" id="Q5T280"/>
<dbReference type="BioGRID-ORCS" id="51490">
    <property type="hits" value="814 hits in 1119 CRISPR screens"/>
</dbReference>
<dbReference type="CD-CODE" id="91857CE7">
    <property type="entry name" value="Nucleolus"/>
</dbReference>
<dbReference type="ChiTaRS" id="SPOUT1">
    <property type="organism name" value="human"/>
</dbReference>
<dbReference type="EvolutionaryTrace" id="Q5T280"/>
<dbReference type="GenomeRNAi" id="51490"/>
<dbReference type="Pharos" id="Q5T280">
    <property type="development level" value="Tbio"/>
</dbReference>
<dbReference type="PRO" id="PR:Q5T280"/>
<dbReference type="Proteomes" id="UP000005640">
    <property type="component" value="Chromosome 9"/>
</dbReference>
<dbReference type="RNAct" id="Q5T280">
    <property type="molecule type" value="protein"/>
</dbReference>
<dbReference type="Bgee" id="ENSG00000198917">
    <property type="expression patterns" value="Expressed in granulocyte and 96 other cell types or tissues"/>
</dbReference>
<dbReference type="ExpressionAtlas" id="Q5T280">
    <property type="expression patterns" value="baseline and differential"/>
</dbReference>
<dbReference type="GO" id="GO:0005737">
    <property type="term" value="C:cytoplasm"/>
    <property type="evidence" value="ECO:0007669"/>
    <property type="project" value="UniProtKB-KW"/>
</dbReference>
<dbReference type="GO" id="GO:0000776">
    <property type="term" value="C:kinetochore"/>
    <property type="evidence" value="ECO:0000314"/>
    <property type="project" value="UniProtKB"/>
</dbReference>
<dbReference type="GO" id="GO:0072686">
    <property type="term" value="C:mitotic spindle"/>
    <property type="evidence" value="ECO:0000314"/>
    <property type="project" value="UniProtKB"/>
</dbReference>
<dbReference type="GO" id="GO:0031616">
    <property type="term" value="C:spindle pole centrosome"/>
    <property type="evidence" value="ECO:0000314"/>
    <property type="project" value="UniProtKB"/>
</dbReference>
<dbReference type="GO" id="GO:0035198">
    <property type="term" value="F:miRNA binding"/>
    <property type="evidence" value="ECO:0000314"/>
    <property type="project" value="UniProtKB"/>
</dbReference>
<dbReference type="GO" id="GO:0003723">
    <property type="term" value="F:RNA binding"/>
    <property type="evidence" value="ECO:0007005"/>
    <property type="project" value="UniProtKB"/>
</dbReference>
<dbReference type="GO" id="GO:0070042">
    <property type="term" value="F:rRNA (uridine-N3-)-methyltransferase activity"/>
    <property type="evidence" value="ECO:0000314"/>
    <property type="project" value="UniProtKB"/>
</dbReference>
<dbReference type="GO" id="GO:1904047">
    <property type="term" value="F:S-adenosyl-L-methionine binding"/>
    <property type="evidence" value="ECO:0000314"/>
    <property type="project" value="UniProtKB"/>
</dbReference>
<dbReference type="GO" id="GO:0051301">
    <property type="term" value="P:cell division"/>
    <property type="evidence" value="ECO:0007669"/>
    <property type="project" value="UniProtKB-KW"/>
</dbReference>
<dbReference type="GO" id="GO:0051661">
    <property type="term" value="P:maintenance of centrosome location"/>
    <property type="evidence" value="ECO:0000315"/>
    <property type="project" value="UniProtKB"/>
</dbReference>
<dbReference type="GO" id="GO:0035196">
    <property type="term" value="P:miRNA processing"/>
    <property type="evidence" value="ECO:0000315"/>
    <property type="project" value="UniProtKB"/>
</dbReference>
<dbReference type="GO" id="GO:0010608">
    <property type="term" value="P:post-transcriptional regulation of gene expression"/>
    <property type="evidence" value="ECO:0000315"/>
    <property type="project" value="UniProtKB"/>
</dbReference>
<dbReference type="GO" id="GO:0070475">
    <property type="term" value="P:rRNA base methylation"/>
    <property type="evidence" value="ECO:0000314"/>
    <property type="project" value="UniProtKB"/>
</dbReference>
<dbReference type="CDD" id="cd18086">
    <property type="entry name" value="HsC9orf114-like"/>
    <property type="match status" value="1"/>
</dbReference>
<dbReference type="FunFam" id="2.40.50.140:FF:000170">
    <property type="entry name" value="SPOUT domain containing methyltransferase 1"/>
    <property type="match status" value="1"/>
</dbReference>
<dbReference type="Gene3D" id="3.40.1280.10">
    <property type="match status" value="1"/>
</dbReference>
<dbReference type="Gene3D" id="2.40.50.140">
    <property type="entry name" value="Nucleic acid-binding proteins"/>
    <property type="match status" value="1"/>
</dbReference>
<dbReference type="InterPro" id="IPR029028">
    <property type="entry name" value="Alpha/beta_knot_MTases"/>
</dbReference>
<dbReference type="InterPro" id="IPR012340">
    <property type="entry name" value="NA-bd_OB-fold"/>
</dbReference>
<dbReference type="InterPro" id="IPR003750">
    <property type="entry name" value="Put_MeTrfase-C9orf114-like"/>
</dbReference>
<dbReference type="InterPro" id="IPR029026">
    <property type="entry name" value="tRNA_m1G_MTases_N"/>
</dbReference>
<dbReference type="PANTHER" id="PTHR12150">
    <property type="entry name" value="CLASS IV SAM-BINDING METHYLTRANSFERASE-RELATED"/>
    <property type="match status" value="1"/>
</dbReference>
<dbReference type="PANTHER" id="PTHR12150:SF13">
    <property type="entry name" value="METHYLTRANSFERASE C9ORF114-RELATED"/>
    <property type="match status" value="1"/>
</dbReference>
<dbReference type="Pfam" id="PF02598">
    <property type="entry name" value="Methyltrn_RNA_3"/>
    <property type="match status" value="1"/>
</dbReference>
<dbReference type="SUPFAM" id="SSF75217">
    <property type="entry name" value="alpha/beta knot"/>
    <property type="match status" value="1"/>
</dbReference>
<dbReference type="SUPFAM" id="SSF50249">
    <property type="entry name" value="Nucleic acid-binding proteins"/>
    <property type="match status" value="1"/>
</dbReference>
<name>SPOUT_HUMAN</name>
<reference key="1">
    <citation type="journal article" date="2004" name="Nature">
        <title>DNA sequence and analysis of human chromosome 9.</title>
        <authorList>
            <person name="Humphray S.J."/>
            <person name="Oliver K."/>
            <person name="Hunt A.R."/>
            <person name="Plumb R.W."/>
            <person name="Loveland J.E."/>
            <person name="Howe K.L."/>
            <person name="Andrews T.D."/>
            <person name="Searle S."/>
            <person name="Hunt S.E."/>
            <person name="Scott C.E."/>
            <person name="Jones M.C."/>
            <person name="Ainscough R."/>
            <person name="Almeida J.P."/>
            <person name="Ambrose K.D."/>
            <person name="Ashwell R.I.S."/>
            <person name="Babbage A.K."/>
            <person name="Babbage S."/>
            <person name="Bagguley C.L."/>
            <person name="Bailey J."/>
            <person name="Banerjee R."/>
            <person name="Barker D.J."/>
            <person name="Barlow K.F."/>
            <person name="Bates K."/>
            <person name="Beasley H."/>
            <person name="Beasley O."/>
            <person name="Bird C.P."/>
            <person name="Bray-Allen S."/>
            <person name="Brown A.J."/>
            <person name="Brown J.Y."/>
            <person name="Burford D."/>
            <person name="Burrill W."/>
            <person name="Burton J."/>
            <person name="Carder C."/>
            <person name="Carter N.P."/>
            <person name="Chapman J.C."/>
            <person name="Chen Y."/>
            <person name="Clarke G."/>
            <person name="Clark S.Y."/>
            <person name="Clee C.M."/>
            <person name="Clegg S."/>
            <person name="Collier R.E."/>
            <person name="Corby N."/>
            <person name="Crosier M."/>
            <person name="Cummings A.T."/>
            <person name="Davies J."/>
            <person name="Dhami P."/>
            <person name="Dunn M."/>
            <person name="Dutta I."/>
            <person name="Dyer L.W."/>
            <person name="Earthrowl M.E."/>
            <person name="Faulkner L."/>
            <person name="Fleming C.J."/>
            <person name="Frankish A."/>
            <person name="Frankland J.A."/>
            <person name="French L."/>
            <person name="Fricker D.G."/>
            <person name="Garner P."/>
            <person name="Garnett J."/>
            <person name="Ghori J."/>
            <person name="Gilbert J.G.R."/>
            <person name="Glison C."/>
            <person name="Grafham D.V."/>
            <person name="Gribble S."/>
            <person name="Griffiths C."/>
            <person name="Griffiths-Jones S."/>
            <person name="Grocock R."/>
            <person name="Guy J."/>
            <person name="Hall R.E."/>
            <person name="Hammond S."/>
            <person name="Harley J.L."/>
            <person name="Harrison E.S.I."/>
            <person name="Hart E.A."/>
            <person name="Heath P.D."/>
            <person name="Henderson C.D."/>
            <person name="Hopkins B.L."/>
            <person name="Howard P.J."/>
            <person name="Howden P.J."/>
            <person name="Huckle E."/>
            <person name="Johnson C."/>
            <person name="Johnson D."/>
            <person name="Joy A.A."/>
            <person name="Kay M."/>
            <person name="Keenan S."/>
            <person name="Kershaw J.K."/>
            <person name="Kimberley A.M."/>
            <person name="King A."/>
            <person name="Knights A."/>
            <person name="Laird G.K."/>
            <person name="Langford C."/>
            <person name="Lawlor S."/>
            <person name="Leongamornlert D.A."/>
            <person name="Leversha M."/>
            <person name="Lloyd C."/>
            <person name="Lloyd D.M."/>
            <person name="Lovell J."/>
            <person name="Martin S."/>
            <person name="Mashreghi-Mohammadi M."/>
            <person name="Matthews L."/>
            <person name="McLaren S."/>
            <person name="McLay K.E."/>
            <person name="McMurray A."/>
            <person name="Milne S."/>
            <person name="Nickerson T."/>
            <person name="Nisbett J."/>
            <person name="Nordsiek G."/>
            <person name="Pearce A.V."/>
            <person name="Peck A.I."/>
            <person name="Porter K.M."/>
            <person name="Pandian R."/>
            <person name="Pelan S."/>
            <person name="Phillimore B."/>
            <person name="Povey S."/>
            <person name="Ramsey Y."/>
            <person name="Rand V."/>
            <person name="Scharfe M."/>
            <person name="Sehra H.K."/>
            <person name="Shownkeen R."/>
            <person name="Sims S.K."/>
            <person name="Skuce C.D."/>
            <person name="Smith M."/>
            <person name="Steward C.A."/>
            <person name="Swarbreck D."/>
            <person name="Sycamore N."/>
            <person name="Tester J."/>
            <person name="Thorpe A."/>
            <person name="Tracey A."/>
            <person name="Tromans A."/>
            <person name="Thomas D.W."/>
            <person name="Wall M."/>
            <person name="Wallis J.M."/>
            <person name="West A.P."/>
            <person name="Whitehead S.L."/>
            <person name="Willey D.L."/>
            <person name="Williams S.A."/>
            <person name="Wilming L."/>
            <person name="Wray P.W."/>
            <person name="Young L."/>
            <person name="Ashurst J.L."/>
            <person name="Coulson A."/>
            <person name="Blocker H."/>
            <person name="Durbin R.M."/>
            <person name="Sulston J.E."/>
            <person name="Hubbard T."/>
            <person name="Jackson M.J."/>
            <person name="Bentley D.R."/>
            <person name="Beck S."/>
            <person name="Rogers J."/>
            <person name="Dunham I."/>
        </authorList>
    </citation>
    <scope>NUCLEOTIDE SEQUENCE [LARGE SCALE GENOMIC DNA]</scope>
</reference>
<reference key="2">
    <citation type="journal article" date="2004" name="Genome Res.">
        <title>The status, quality, and expansion of the NIH full-length cDNA project: the Mammalian Gene Collection (MGC).</title>
        <authorList>
            <consortium name="The MGC Project Team"/>
        </authorList>
    </citation>
    <scope>NUCLEOTIDE SEQUENCE [LARGE SCALE MRNA]</scope>
    <scope>VARIANTS ARG-130 AND THR-369</scope>
    <source>
        <tissue>Brain</tissue>
        <tissue>Eye</tissue>
        <tissue>Leukocyte</tissue>
        <tissue>Ovary</tissue>
        <tissue>Testis</tissue>
    </source>
</reference>
<reference key="3">
    <citation type="journal article" date="2010" name="Cell">
        <title>The protein composition of mitotic chromosomes determined using multiclassifier combinatorial proteomics.</title>
        <authorList>
            <person name="Ohta S."/>
            <person name="Bukowski-Wills J.C."/>
            <person name="Sanchez-Pulido L."/>
            <person name="Alves Fde L."/>
            <person name="Wood L."/>
            <person name="Chen Z.A."/>
            <person name="Platani M."/>
            <person name="Fischer L."/>
            <person name="Hudson D.F."/>
            <person name="Ponting C.P."/>
            <person name="Fukagawa T."/>
            <person name="Earnshaw W.C."/>
            <person name="Rappsilber J."/>
        </authorList>
    </citation>
    <scope>FUNCTION</scope>
    <scope>SUBCELLULAR LOCATION</scope>
</reference>
<reference key="4">
    <citation type="journal article" date="2011" name="BMC Syst. Biol.">
        <title>Initial characterization of the human central proteome.</title>
        <authorList>
            <person name="Burkard T.R."/>
            <person name="Planyavsky M."/>
            <person name="Kaupe I."/>
            <person name="Breitwieser F.P."/>
            <person name="Buerckstuemmer T."/>
            <person name="Bennett K.L."/>
            <person name="Superti-Furga G."/>
            <person name="Colinge J."/>
        </authorList>
    </citation>
    <scope>IDENTIFICATION BY MASS SPECTROMETRY [LARGE SCALE ANALYSIS]</scope>
</reference>
<reference key="5">
    <citation type="journal article" date="2011" name="PLoS ONE">
        <title>The inhibitor of growth protein 5 (ING5) depends on INCA1 as a co-factor for its antiproliferative effects.</title>
        <authorList>
            <person name="Zhang F."/>
            <person name="Baeumer N."/>
            <person name="Rode M."/>
            <person name="Ji P."/>
            <person name="Zhang T."/>
            <person name="Berdel W.E."/>
            <person name="Mueller-Tidow C."/>
        </authorList>
    </citation>
    <scope>INTERACTION WITH INCA1</scope>
</reference>
<reference key="6">
    <citation type="journal article" date="2015" name="Mol. Biol. Cell">
        <title>CENP-32 is required to maintain centrosomal dominance in bipolar spindle assembly.</title>
        <authorList>
            <person name="Ohta S."/>
            <person name="Wood L."/>
            <person name="Toramoto I."/>
            <person name="Yagyu K."/>
            <person name="Fukagawa T."/>
            <person name="Earnshaw W.C."/>
        </authorList>
    </citation>
    <scope>FUNCTION</scope>
    <scope>SUBCELLULAR LOCATION</scope>
</reference>
<reference key="7">
    <citation type="journal article" date="2017" name="Mol. Cell">
        <title>A Compendium of RNA-Binding Proteins that Regulate MicroRNA Biogenesis.</title>
        <authorList>
            <person name="Treiber T."/>
            <person name="Treiber N."/>
            <person name="Plessmann U."/>
            <person name="Harlander S."/>
            <person name="Daiss J.L."/>
            <person name="Eichner N."/>
            <person name="Lehmann G."/>
            <person name="Schall K."/>
            <person name="Urlaub H."/>
            <person name="Meister G."/>
        </authorList>
    </citation>
    <scope>FUNCTION</scope>
    <scope>MIRNA-BINDING</scope>
</reference>
<reference key="8">
    <citation type="journal article" date="2024" name="Sci. Adv.">
        <title>The Ptch/SPOUT1 methyltransferase deposits an m3U modification on 28S rRNA for normal ribosomal function in flies and humans.</title>
        <authorList>
            <person name="Chen J."/>
            <person name="Bai Y."/>
            <person name="Huang Y."/>
            <person name="Cui M."/>
            <person name="Wang Y."/>
            <person name="Gu Z."/>
            <person name="Wu X."/>
            <person name="Li Y."/>
            <person name="Rong Y.S."/>
        </authorList>
    </citation>
    <scope>FUNCTION</scope>
    <scope>CATALYTIC ACTIVITY</scope>
</reference>
<reference evidence="14" key="9">
    <citation type="submission" date="2014-09" db="PDB data bank">
        <title>The Crystal Structure of Human C9orf114 in complex with S-adenosyl-homocysteine.</title>
        <authorList>
            <person name="Zeng H."/>
            <person name="Dong A."/>
            <person name="Walker J.R."/>
            <person name="Li Y."/>
            <person name="Bountra C."/>
            <person name="Arrowsmith C.H."/>
            <person name="Edwards A.M."/>
            <person name="Brown P.J."/>
            <person name="Wu H."/>
        </authorList>
    </citation>
    <scope>X-RAY CRYSTALLOGRAPHY (1.86 ANGSTROMS) OF 64-376 IN COMPLEX WITH S-ADENOSYL-L-HOMOCYSTEINE</scope>
</reference>
<reference evidence="15 16 17" key="10">
    <citation type="submission" date="2023-10" db="PDB data bank">
        <title>Bi-allelic variants of SPOUT1, a novel RNA methyltransferase, cause chromosome missegregation and a rare neurodevelopmental disease.</title>
        <authorList>
            <person name="Jeyaprakash A.A."/>
            <person name="Abad M.A."/>
        </authorList>
    </citation>
    <scope>X-RAY CRYSTALLOGRAPHY (2.38 ANGSTROMS) OF 71-376 IN COMPLEX WITH S-ADENOSYL-L-HOMOCYSTEINE AND S-ADENOSYL-L-METHIONINE</scope>
</reference>
<accession>Q5T280</accession>
<accession>Q0D2P6</accession>
<accession>Q6P469</accession>
<accession>Q6PGP9</accession>
<accession>Q6PIJ1</accession>
<accession>Q6PJV9</accession>
<comment type="function">
    <text evidence="3 5 6 7">S-adenosyl-L-methionine-dependent methyltransferase that specifically methylates the N3 position of a uridine in 28S rRNA (PubMed:39671501). Required for association of the centrosomes with the poles of the bipolar mitotic spindle during metaphase (PubMed:20813266, PubMed:25657325). Also involved in chromosome alignment (PubMed:20813266). May promote centrosome maturation probably by recruiting A-kinase anchor protein AKAP9 to centrosomes in early mitosis (PubMed:25657325). Binds specifically to miRNA MIR145 hairpin, regulates MIR145 expression at a postranscriptional level (PubMed:28431233).</text>
</comment>
<comment type="catalytic activity">
    <reaction evidence="7">
        <text>uridine in 28S rRNA + S-adenosyl-L-methionine = N(3)-methyluridine in 28S rRNA + S-adenosyl-L-homocysteine + H(+)</text>
        <dbReference type="Rhea" id="RHEA:83635"/>
        <dbReference type="Rhea" id="RHEA-COMP:20178"/>
        <dbReference type="Rhea" id="RHEA-COMP:20181"/>
        <dbReference type="ChEBI" id="CHEBI:15378"/>
        <dbReference type="ChEBI" id="CHEBI:57856"/>
        <dbReference type="ChEBI" id="CHEBI:59789"/>
        <dbReference type="ChEBI" id="CHEBI:65315"/>
        <dbReference type="ChEBI" id="CHEBI:74502"/>
    </reaction>
    <physiologicalReaction direction="left-to-right" evidence="12">
        <dbReference type="Rhea" id="RHEA:83636"/>
    </physiologicalReaction>
</comment>
<comment type="subunit">
    <text evidence="4">Interacts with INCA1.</text>
</comment>
<comment type="interaction">
    <interactant intactId="EBI-2880213">
        <id>Q5T280</id>
    </interactant>
    <interactant intactId="EBI-6509505">
        <id>Q0VD86</id>
        <label>INCA1</label>
    </interactant>
    <organismsDiffer>false</organismsDiffer>
    <experiments>2</experiments>
</comment>
<comment type="subcellular location">
    <subcellularLocation>
        <location evidence="5">Cytoplasm</location>
        <location evidence="5">Cytoskeleton</location>
        <location evidence="5">Spindle</location>
    </subcellularLocation>
    <subcellularLocation>
        <location evidence="3 5">Chromosome</location>
        <location evidence="3 5">Centromere</location>
        <location evidence="3 5">Kinetochore</location>
    </subcellularLocation>
    <subcellularLocation>
        <location evidence="5">Cytoplasm</location>
        <location evidence="5">Cytoskeleton</location>
        <location evidence="5">Microtubule organizing center</location>
        <location evidence="5">Centrosome</location>
    </subcellularLocation>
    <text evidence="3">Associated with the outer kinetochore.</text>
</comment>
<comment type="miscellaneous">
    <text evidence="3">Depletion with RNAi causes a significant accumulation of cells in later prometaphase with misaligned chromosomes.</text>
</comment>
<comment type="similarity">
    <text evidence="11">Belongs to the class IV-like SAM-binding methyltransferase superfamily.</text>
</comment>
<keyword id="KW-0002">3D-structure</keyword>
<keyword id="KW-0131">Cell cycle</keyword>
<keyword id="KW-0132">Cell division</keyword>
<keyword id="KW-0137">Centromere</keyword>
<keyword id="KW-0158">Chromosome</keyword>
<keyword id="KW-0963">Cytoplasm</keyword>
<keyword id="KW-0206">Cytoskeleton</keyword>
<keyword id="KW-0995">Kinetochore</keyword>
<keyword id="KW-0489">Methyltransferase</keyword>
<keyword id="KW-0498">Mitosis</keyword>
<keyword id="KW-1267">Proteomics identification</keyword>
<keyword id="KW-1185">Reference proteome</keyword>
<keyword id="KW-0694">RNA-binding</keyword>
<keyword id="KW-0698">rRNA processing</keyword>
<keyword id="KW-0949">S-adenosyl-L-methionine</keyword>
<keyword id="KW-0808">Transferase</keyword>
<proteinExistence type="evidence at protein level"/>